<gene>
    <name type="primary">PYRD</name>
    <name type="ordered locus">Os04g0676300</name>
    <name type="ordered locus">LOC_Os04g57950</name>
    <name type="ORF">OsJ_16613</name>
    <name type="ORF">OSJNBa0064G10.3</name>
</gene>
<sequence length="469" mass="49534">MSSSAAALAWRRSLRDALLRGSAWRGAPAANSAAARLASTASASEAAAGPKKVPPPPRKGRLLTGAMIGLAIAGGAYVSTADEAKFCGWLFKSTQLVNPLFALLDAEFAHRLAVTAASHGFVPREKRPDPSVLGLEIWGRKFTNPIGLAAGFDKNAEAVEGLLGMGFGFVEVGSVTPLPQEGNPKPRIFRLREHGAVINRCGFNSEGIVVVAKRLGAQHGKRKMEETSSSTSPTTSDVKQGGKAGPGILGVNLGKNKISEDATADYVQGVHTLSQYADYLVINVSSPNTPGLRKLQGRKQLKDLVKKVQAARDEMQWAEDGPPPLLVKIAPDLSKQDLEDIAAVALALRLDGLIISNTTISRPSPADTHPLAQEAGGLSGKPLFDLSTNVLREMYILTRGKIPLIGCGGVSSGEDAYKKIRSGATLVQLYTAFAYGGPALIPRIKAELAECLERDGFKSVQEAVGADFK</sequence>
<reference key="1">
    <citation type="submission" date="2000-02" db="EMBL/GenBank/DDBJ databases">
        <title>Oryza sativa dihydroorotate dehydrogenase gene, complete cds.</title>
        <authorList>
            <person name="Ito Y."/>
        </authorList>
    </citation>
    <scope>NUCLEOTIDE SEQUENCE [GENOMIC DNA]</scope>
</reference>
<reference key="2">
    <citation type="submission" date="2005-10" db="EMBL/GenBank/DDBJ databases">
        <title>Cloning of a cDNA for senescence-related protein from Oryza sativa.</title>
        <authorList>
            <person name="Wang M.M."/>
        </authorList>
    </citation>
    <scope>NUCLEOTIDE SEQUENCE [MRNA]</scope>
    <source>
        <tissue>Leaf</tissue>
    </source>
</reference>
<reference key="3">
    <citation type="journal article" date="2002" name="Nature">
        <title>Sequence and analysis of rice chromosome 4.</title>
        <authorList>
            <person name="Feng Q."/>
            <person name="Zhang Y."/>
            <person name="Hao P."/>
            <person name="Wang S."/>
            <person name="Fu G."/>
            <person name="Huang Y."/>
            <person name="Li Y."/>
            <person name="Zhu J."/>
            <person name="Liu Y."/>
            <person name="Hu X."/>
            <person name="Jia P."/>
            <person name="Zhang Y."/>
            <person name="Zhao Q."/>
            <person name="Ying K."/>
            <person name="Yu S."/>
            <person name="Tang Y."/>
            <person name="Weng Q."/>
            <person name="Zhang L."/>
            <person name="Lu Y."/>
            <person name="Mu J."/>
            <person name="Lu Y."/>
            <person name="Zhang L.S."/>
            <person name="Yu Z."/>
            <person name="Fan D."/>
            <person name="Liu X."/>
            <person name="Lu T."/>
            <person name="Li C."/>
            <person name="Wu Y."/>
            <person name="Sun T."/>
            <person name="Lei H."/>
            <person name="Li T."/>
            <person name="Hu H."/>
            <person name="Guan J."/>
            <person name="Wu M."/>
            <person name="Zhang R."/>
            <person name="Zhou B."/>
            <person name="Chen Z."/>
            <person name="Chen L."/>
            <person name="Jin Z."/>
            <person name="Wang R."/>
            <person name="Yin H."/>
            <person name="Cai Z."/>
            <person name="Ren S."/>
            <person name="Lv G."/>
            <person name="Gu W."/>
            <person name="Zhu G."/>
            <person name="Tu Y."/>
            <person name="Jia J."/>
            <person name="Zhang Y."/>
            <person name="Chen J."/>
            <person name="Kang H."/>
            <person name="Chen X."/>
            <person name="Shao C."/>
            <person name="Sun Y."/>
            <person name="Hu Q."/>
            <person name="Zhang X."/>
            <person name="Zhang W."/>
            <person name="Wang L."/>
            <person name="Ding C."/>
            <person name="Sheng H."/>
            <person name="Gu J."/>
            <person name="Chen S."/>
            <person name="Ni L."/>
            <person name="Zhu F."/>
            <person name="Chen W."/>
            <person name="Lan L."/>
            <person name="Lai Y."/>
            <person name="Cheng Z."/>
            <person name="Gu M."/>
            <person name="Jiang J."/>
            <person name="Li J."/>
            <person name="Hong G."/>
            <person name="Xue Y."/>
            <person name="Han B."/>
        </authorList>
    </citation>
    <scope>NUCLEOTIDE SEQUENCE [LARGE SCALE GENOMIC DNA]</scope>
    <source>
        <strain>cv. Nipponbare</strain>
    </source>
</reference>
<reference key="4">
    <citation type="journal article" date="2005" name="Nature">
        <title>The map-based sequence of the rice genome.</title>
        <authorList>
            <consortium name="International rice genome sequencing project (IRGSP)"/>
        </authorList>
    </citation>
    <scope>NUCLEOTIDE SEQUENCE [LARGE SCALE GENOMIC DNA]</scope>
    <source>
        <strain>cv. Nipponbare</strain>
    </source>
</reference>
<reference key="5">
    <citation type="journal article" date="2008" name="Nucleic Acids Res.">
        <title>The rice annotation project database (RAP-DB): 2008 update.</title>
        <authorList>
            <consortium name="The rice annotation project (RAP)"/>
        </authorList>
    </citation>
    <scope>GENOME REANNOTATION</scope>
    <source>
        <strain>cv. Nipponbare</strain>
    </source>
</reference>
<reference key="6">
    <citation type="journal article" date="2013" name="Rice">
        <title>Improvement of the Oryza sativa Nipponbare reference genome using next generation sequence and optical map data.</title>
        <authorList>
            <person name="Kawahara Y."/>
            <person name="de la Bastide M."/>
            <person name="Hamilton J.P."/>
            <person name="Kanamori H."/>
            <person name="McCombie W.R."/>
            <person name="Ouyang S."/>
            <person name="Schwartz D.C."/>
            <person name="Tanaka T."/>
            <person name="Wu J."/>
            <person name="Zhou S."/>
            <person name="Childs K.L."/>
            <person name="Davidson R.M."/>
            <person name="Lin H."/>
            <person name="Quesada-Ocampo L."/>
            <person name="Vaillancourt B."/>
            <person name="Sakai H."/>
            <person name="Lee S.S."/>
            <person name="Kim J."/>
            <person name="Numa H."/>
            <person name="Itoh T."/>
            <person name="Buell C.R."/>
            <person name="Matsumoto T."/>
        </authorList>
    </citation>
    <scope>GENOME REANNOTATION</scope>
    <source>
        <strain>cv. Nipponbare</strain>
    </source>
</reference>
<reference key="7">
    <citation type="journal article" date="2005" name="PLoS Biol.">
        <title>The genomes of Oryza sativa: a history of duplications.</title>
        <authorList>
            <person name="Yu J."/>
            <person name="Wang J."/>
            <person name="Lin W."/>
            <person name="Li S."/>
            <person name="Li H."/>
            <person name="Zhou J."/>
            <person name="Ni P."/>
            <person name="Dong W."/>
            <person name="Hu S."/>
            <person name="Zeng C."/>
            <person name="Zhang J."/>
            <person name="Zhang Y."/>
            <person name="Li R."/>
            <person name="Xu Z."/>
            <person name="Li S."/>
            <person name="Li X."/>
            <person name="Zheng H."/>
            <person name="Cong L."/>
            <person name="Lin L."/>
            <person name="Yin J."/>
            <person name="Geng J."/>
            <person name="Li G."/>
            <person name="Shi J."/>
            <person name="Liu J."/>
            <person name="Lv H."/>
            <person name="Li J."/>
            <person name="Wang J."/>
            <person name="Deng Y."/>
            <person name="Ran L."/>
            <person name="Shi X."/>
            <person name="Wang X."/>
            <person name="Wu Q."/>
            <person name="Li C."/>
            <person name="Ren X."/>
            <person name="Wang J."/>
            <person name="Wang X."/>
            <person name="Li D."/>
            <person name="Liu D."/>
            <person name="Zhang X."/>
            <person name="Ji Z."/>
            <person name="Zhao W."/>
            <person name="Sun Y."/>
            <person name="Zhang Z."/>
            <person name="Bao J."/>
            <person name="Han Y."/>
            <person name="Dong L."/>
            <person name="Ji J."/>
            <person name="Chen P."/>
            <person name="Wu S."/>
            <person name="Liu J."/>
            <person name="Xiao Y."/>
            <person name="Bu D."/>
            <person name="Tan J."/>
            <person name="Yang L."/>
            <person name="Ye C."/>
            <person name="Zhang J."/>
            <person name="Xu J."/>
            <person name="Zhou Y."/>
            <person name="Yu Y."/>
            <person name="Zhang B."/>
            <person name="Zhuang S."/>
            <person name="Wei H."/>
            <person name="Liu B."/>
            <person name="Lei M."/>
            <person name="Yu H."/>
            <person name="Li Y."/>
            <person name="Xu H."/>
            <person name="Wei S."/>
            <person name="He X."/>
            <person name="Fang L."/>
            <person name="Zhang Z."/>
            <person name="Zhang Y."/>
            <person name="Huang X."/>
            <person name="Su Z."/>
            <person name="Tong W."/>
            <person name="Li J."/>
            <person name="Tong Z."/>
            <person name="Li S."/>
            <person name="Ye J."/>
            <person name="Wang L."/>
            <person name="Fang L."/>
            <person name="Lei T."/>
            <person name="Chen C.-S."/>
            <person name="Chen H.-C."/>
            <person name="Xu Z."/>
            <person name="Li H."/>
            <person name="Huang H."/>
            <person name="Zhang F."/>
            <person name="Xu H."/>
            <person name="Li N."/>
            <person name="Zhao C."/>
            <person name="Li S."/>
            <person name="Dong L."/>
            <person name="Huang Y."/>
            <person name="Li L."/>
            <person name="Xi Y."/>
            <person name="Qi Q."/>
            <person name="Li W."/>
            <person name="Zhang B."/>
            <person name="Hu W."/>
            <person name="Zhang Y."/>
            <person name="Tian X."/>
            <person name="Jiao Y."/>
            <person name="Liang X."/>
            <person name="Jin J."/>
            <person name="Gao L."/>
            <person name="Zheng W."/>
            <person name="Hao B."/>
            <person name="Liu S.-M."/>
            <person name="Wang W."/>
            <person name="Yuan L."/>
            <person name="Cao M."/>
            <person name="McDermott J."/>
            <person name="Samudrala R."/>
            <person name="Wang J."/>
            <person name="Wong G.K.-S."/>
            <person name="Yang H."/>
        </authorList>
    </citation>
    <scope>NUCLEOTIDE SEQUENCE [LARGE SCALE GENOMIC DNA]</scope>
    <source>
        <strain>cv. Nipponbare</strain>
    </source>
</reference>
<name>PYRD_ORYSJ</name>
<evidence type="ECO:0000250" key="1"/>
<evidence type="ECO:0000255" key="2"/>
<evidence type="ECO:0000256" key="3">
    <source>
        <dbReference type="SAM" id="MobiDB-lite"/>
    </source>
</evidence>
<evidence type="ECO:0000305" key="4"/>
<feature type="transit peptide" description="Mitochondrion" evidence="2">
    <location>
        <begin position="1"/>
        <end position="37"/>
    </location>
</feature>
<feature type="chain" id="PRO_0000423080" description="Dihydroorotate dehydrogenase (quinone), mitochondrial">
    <location>
        <begin position="38"/>
        <end position="469"/>
    </location>
</feature>
<feature type="transmembrane region" description="Helical" evidence="2">
    <location>
        <begin position="62"/>
        <end position="82"/>
    </location>
</feature>
<feature type="region of interest" description="Disordered" evidence="3">
    <location>
        <begin position="219"/>
        <end position="247"/>
    </location>
</feature>
<feature type="compositionally biased region" description="Low complexity" evidence="3">
    <location>
        <begin position="227"/>
        <end position="236"/>
    </location>
</feature>
<feature type="active site" description="Nucleophile" evidence="1">
    <location>
        <position position="286"/>
    </location>
</feature>
<feature type="binding site" evidence="1">
    <location>
        <begin position="150"/>
        <end position="154"/>
    </location>
    <ligand>
        <name>FMN</name>
        <dbReference type="ChEBI" id="CHEBI:58210"/>
    </ligand>
</feature>
<feature type="binding site" evidence="1">
    <location>
        <position position="154"/>
    </location>
    <ligand>
        <name>substrate</name>
    </ligand>
</feature>
<feature type="binding site" evidence="1">
    <location>
        <position position="174"/>
    </location>
    <ligand>
        <name>FMN</name>
        <dbReference type="ChEBI" id="CHEBI:58210"/>
    </ligand>
</feature>
<feature type="binding site" evidence="1">
    <location>
        <begin position="199"/>
        <end position="203"/>
    </location>
    <ligand>
        <name>substrate</name>
    </ligand>
</feature>
<feature type="binding site" evidence="1">
    <location>
        <position position="252"/>
    </location>
    <ligand>
        <name>FMN</name>
        <dbReference type="ChEBI" id="CHEBI:58210"/>
    </ligand>
</feature>
<feature type="binding site" evidence="1">
    <location>
        <begin position="283"/>
        <end position="288"/>
    </location>
    <ligand>
        <name>substrate</name>
    </ligand>
</feature>
<feature type="binding site" evidence="1">
    <location>
        <position position="283"/>
    </location>
    <ligand>
        <name>FMN</name>
        <dbReference type="ChEBI" id="CHEBI:58210"/>
    </ligand>
</feature>
<feature type="binding site" evidence="1">
    <location>
        <position position="328"/>
    </location>
    <ligand>
        <name>FMN</name>
        <dbReference type="ChEBI" id="CHEBI:58210"/>
    </ligand>
</feature>
<feature type="binding site" evidence="1">
    <location>
        <position position="356"/>
    </location>
    <ligand>
        <name>FMN</name>
        <dbReference type="ChEBI" id="CHEBI:58210"/>
    </ligand>
</feature>
<feature type="binding site" evidence="1">
    <location>
        <begin position="357"/>
        <end position="358"/>
    </location>
    <ligand>
        <name>substrate</name>
    </ligand>
</feature>
<feature type="binding site" evidence="1">
    <location>
        <position position="380"/>
    </location>
    <ligand>
        <name>FMN</name>
        <dbReference type="ChEBI" id="CHEBI:58210"/>
    </ligand>
</feature>
<feature type="binding site" evidence="1">
    <location>
        <position position="409"/>
    </location>
    <ligand>
        <name>FMN</name>
        <dbReference type="ChEBI" id="CHEBI:58210"/>
    </ligand>
</feature>
<feature type="binding site" evidence="1">
    <location>
        <begin position="430"/>
        <end position="431"/>
    </location>
    <ligand>
        <name>FMN</name>
        <dbReference type="ChEBI" id="CHEBI:58210"/>
    </ligand>
</feature>
<accession>Q7XKC8</accession>
<accession>A0A0P0WG90</accession>
<accession>Q0J918</accession>
<accession>Q9FZM9</accession>
<protein>
    <recommendedName>
        <fullName>Dihydroorotate dehydrogenase (quinone), mitochondrial</fullName>
        <shortName>DHOdehase</shortName>
        <ecNumber>1.3.5.2</ecNumber>
    </recommendedName>
    <alternativeName>
        <fullName>Dihydroorotate oxidase</fullName>
    </alternativeName>
</protein>
<comment type="function">
    <text evidence="1">Catalyzes the conversion of dihydroorotate to orotate with quinone as electron acceptor.</text>
</comment>
<comment type="catalytic activity">
    <reaction>
        <text>(S)-dihydroorotate + a quinone = orotate + a quinol</text>
        <dbReference type="Rhea" id="RHEA:30187"/>
        <dbReference type="ChEBI" id="CHEBI:24646"/>
        <dbReference type="ChEBI" id="CHEBI:30839"/>
        <dbReference type="ChEBI" id="CHEBI:30864"/>
        <dbReference type="ChEBI" id="CHEBI:132124"/>
        <dbReference type="EC" id="1.3.5.2"/>
    </reaction>
</comment>
<comment type="cofactor">
    <cofactor>
        <name>FMN</name>
        <dbReference type="ChEBI" id="CHEBI:58210"/>
    </cofactor>
    <text>Binds 1 FMN per subunit.</text>
</comment>
<comment type="pathway">
    <text>Pyrimidine metabolism; UMP biosynthesis via de novo pathway; orotate from (S)-dihydroorotate (quinone route): step 1/1.</text>
</comment>
<comment type="subcellular location">
    <subcellularLocation>
        <location evidence="4">Mitochondrion inner membrane</location>
        <topology evidence="4">Single-pass membrane protein</topology>
    </subcellularLocation>
</comment>
<comment type="similarity">
    <text evidence="4">Belongs to the dihydroorotate dehydrogenase family. Type 2 subfamily.</text>
</comment>
<comment type="sequence caution" evidence="4">
    <conflict type="erroneous gene model prediction">
        <sequence resource="EMBL-CDS" id="BAB11988"/>
    </conflict>
</comment>
<comment type="sequence caution" evidence="4">
    <conflict type="erroneous gene model prediction">
        <sequence resource="EMBL-CDS" id="BAF16169"/>
    </conflict>
</comment>
<keyword id="KW-0285">Flavoprotein</keyword>
<keyword id="KW-0288">FMN</keyword>
<keyword id="KW-0472">Membrane</keyword>
<keyword id="KW-0496">Mitochondrion</keyword>
<keyword id="KW-0999">Mitochondrion inner membrane</keyword>
<keyword id="KW-0560">Oxidoreductase</keyword>
<keyword id="KW-1185">Reference proteome</keyword>
<keyword id="KW-0809">Transit peptide</keyword>
<keyword id="KW-0812">Transmembrane</keyword>
<keyword id="KW-1133">Transmembrane helix</keyword>
<dbReference type="EC" id="1.3.5.2"/>
<dbReference type="EMBL" id="AB038557">
    <property type="protein sequence ID" value="BAB11988.1"/>
    <property type="status" value="ALT_SEQ"/>
    <property type="molecule type" value="Genomic_DNA"/>
</dbReference>
<dbReference type="EMBL" id="DQ269457">
    <property type="protein sequence ID" value="ABB76659.1"/>
    <property type="molecule type" value="mRNA"/>
</dbReference>
<dbReference type="EMBL" id="AL606668">
    <property type="protein sequence ID" value="CAE05752.1"/>
    <property type="molecule type" value="Genomic_DNA"/>
</dbReference>
<dbReference type="EMBL" id="AP008210">
    <property type="protein sequence ID" value="BAF16169.2"/>
    <property type="status" value="ALT_SEQ"/>
    <property type="molecule type" value="Genomic_DNA"/>
</dbReference>
<dbReference type="EMBL" id="AP014960">
    <property type="protein sequence ID" value="BAS91623.1"/>
    <property type="molecule type" value="Genomic_DNA"/>
</dbReference>
<dbReference type="EMBL" id="CM000141">
    <property type="protein sequence ID" value="EAZ32402.1"/>
    <property type="molecule type" value="Genomic_DNA"/>
</dbReference>
<dbReference type="RefSeq" id="XP_015633939.1">
    <property type="nucleotide sequence ID" value="XM_015778453.1"/>
</dbReference>
<dbReference type="SMR" id="Q7XKC8"/>
<dbReference type="FunCoup" id="Q7XKC8">
    <property type="interactions" value="1802"/>
</dbReference>
<dbReference type="STRING" id="39947.Q7XKC8"/>
<dbReference type="PaxDb" id="39947-Q7XKC8"/>
<dbReference type="EnsemblPlants" id="Os04t0676300-01">
    <property type="protein sequence ID" value="Os04t0676300-01"/>
    <property type="gene ID" value="Os04g0676300"/>
</dbReference>
<dbReference type="Gramene" id="Os04t0676300-01">
    <property type="protein sequence ID" value="Os04t0676300-01"/>
    <property type="gene ID" value="Os04g0676300"/>
</dbReference>
<dbReference type="KEGG" id="dosa:Os04g0676300"/>
<dbReference type="eggNOG" id="KOG1436">
    <property type="taxonomic scope" value="Eukaryota"/>
</dbReference>
<dbReference type="HOGENOM" id="CLU_013640_0_0_1"/>
<dbReference type="InParanoid" id="Q7XKC8"/>
<dbReference type="OMA" id="IYGTDTR"/>
<dbReference type="OrthoDB" id="14784at2759"/>
<dbReference type="UniPathway" id="UPA00070">
    <property type="reaction ID" value="UER00946"/>
</dbReference>
<dbReference type="Proteomes" id="UP000000763">
    <property type="component" value="Chromosome 4"/>
</dbReference>
<dbReference type="Proteomes" id="UP000007752">
    <property type="component" value="Chromosome 4"/>
</dbReference>
<dbReference type="Proteomes" id="UP000059680">
    <property type="component" value="Chromosome 4"/>
</dbReference>
<dbReference type="GO" id="GO:0005743">
    <property type="term" value="C:mitochondrial inner membrane"/>
    <property type="evidence" value="ECO:0000318"/>
    <property type="project" value="GO_Central"/>
</dbReference>
<dbReference type="GO" id="GO:0106430">
    <property type="term" value="F:dihydroorotate dehydrogenase (quinone) activity"/>
    <property type="evidence" value="ECO:0007669"/>
    <property type="project" value="UniProtKB-EC"/>
</dbReference>
<dbReference type="GO" id="GO:0004152">
    <property type="term" value="F:dihydroorotate dehydrogenase activity"/>
    <property type="evidence" value="ECO:0000318"/>
    <property type="project" value="GO_Central"/>
</dbReference>
<dbReference type="GO" id="GO:0006207">
    <property type="term" value="P:'de novo' pyrimidine nucleobase biosynthetic process"/>
    <property type="evidence" value="ECO:0000318"/>
    <property type="project" value="GO_Central"/>
</dbReference>
<dbReference type="GO" id="GO:0044205">
    <property type="term" value="P:'de novo' UMP biosynthetic process"/>
    <property type="evidence" value="ECO:0007669"/>
    <property type="project" value="UniProtKB-UniPathway"/>
</dbReference>
<dbReference type="GO" id="GO:0009220">
    <property type="term" value="P:pyrimidine ribonucleotide biosynthetic process"/>
    <property type="evidence" value="ECO:0000318"/>
    <property type="project" value="GO_Central"/>
</dbReference>
<dbReference type="CDD" id="cd04738">
    <property type="entry name" value="DHOD_2_like"/>
    <property type="match status" value="1"/>
</dbReference>
<dbReference type="FunFam" id="3.20.20.70:FF:000066">
    <property type="entry name" value="Dihydroorotate dehydrogenase (quinone), mitochondrial"/>
    <property type="match status" value="1"/>
</dbReference>
<dbReference type="Gene3D" id="3.20.20.70">
    <property type="entry name" value="Aldolase class I"/>
    <property type="match status" value="1"/>
</dbReference>
<dbReference type="InterPro" id="IPR013785">
    <property type="entry name" value="Aldolase_TIM"/>
</dbReference>
<dbReference type="InterPro" id="IPR050074">
    <property type="entry name" value="DHO_dehydrogenase"/>
</dbReference>
<dbReference type="InterPro" id="IPR005719">
    <property type="entry name" value="Dihydroorotate_DH_2"/>
</dbReference>
<dbReference type="InterPro" id="IPR005720">
    <property type="entry name" value="Dihydroorotate_DH_cat"/>
</dbReference>
<dbReference type="InterPro" id="IPR001295">
    <property type="entry name" value="Dihydroorotate_DH_CS"/>
</dbReference>
<dbReference type="NCBIfam" id="NF003645">
    <property type="entry name" value="PRK05286.1-2"/>
    <property type="match status" value="1"/>
</dbReference>
<dbReference type="NCBIfam" id="NF003652">
    <property type="entry name" value="PRK05286.2-5"/>
    <property type="match status" value="1"/>
</dbReference>
<dbReference type="NCBIfam" id="TIGR01036">
    <property type="entry name" value="pyrD_sub2"/>
    <property type="match status" value="1"/>
</dbReference>
<dbReference type="PANTHER" id="PTHR48109:SF4">
    <property type="entry name" value="DIHYDROOROTATE DEHYDROGENASE (QUINONE), MITOCHONDRIAL"/>
    <property type="match status" value="1"/>
</dbReference>
<dbReference type="PANTHER" id="PTHR48109">
    <property type="entry name" value="DIHYDROOROTATE DEHYDROGENASE (QUINONE), MITOCHONDRIAL-RELATED"/>
    <property type="match status" value="1"/>
</dbReference>
<dbReference type="Pfam" id="PF01180">
    <property type="entry name" value="DHO_dh"/>
    <property type="match status" value="1"/>
</dbReference>
<dbReference type="SUPFAM" id="SSF51395">
    <property type="entry name" value="FMN-linked oxidoreductases"/>
    <property type="match status" value="1"/>
</dbReference>
<dbReference type="PROSITE" id="PS00911">
    <property type="entry name" value="DHODEHASE_1"/>
    <property type="match status" value="1"/>
</dbReference>
<dbReference type="PROSITE" id="PS00912">
    <property type="entry name" value="DHODEHASE_2"/>
    <property type="match status" value="1"/>
</dbReference>
<proteinExistence type="evidence at transcript level"/>
<organism>
    <name type="scientific">Oryza sativa subsp. japonica</name>
    <name type="common">Rice</name>
    <dbReference type="NCBI Taxonomy" id="39947"/>
    <lineage>
        <taxon>Eukaryota</taxon>
        <taxon>Viridiplantae</taxon>
        <taxon>Streptophyta</taxon>
        <taxon>Embryophyta</taxon>
        <taxon>Tracheophyta</taxon>
        <taxon>Spermatophyta</taxon>
        <taxon>Magnoliopsida</taxon>
        <taxon>Liliopsida</taxon>
        <taxon>Poales</taxon>
        <taxon>Poaceae</taxon>
        <taxon>BOP clade</taxon>
        <taxon>Oryzoideae</taxon>
        <taxon>Oryzeae</taxon>
        <taxon>Oryzinae</taxon>
        <taxon>Oryza</taxon>
        <taxon>Oryza sativa</taxon>
    </lineage>
</organism>